<protein>
    <recommendedName>
        <fullName evidence="1">Proteasome subunit alpha 1</fullName>
    </recommendedName>
    <alternativeName>
        <fullName evidence="1">20S proteasome alpha subunit 1</fullName>
    </alternativeName>
    <alternativeName>
        <fullName evidence="1">Proteasome core protein PrcA 1</fullName>
    </alternativeName>
</protein>
<comment type="function">
    <text evidence="1 5 6">Component of the proteasome core, a large protease complex with broad specificity involved in protein degradation. The R.erythropolis proteasomes are able to cleave oligopeptides after Tyr, Phe and Leu, very poorly after Arg but not after Glu. Thus, displays chymotrypsin-like activity, low trypsin-like activity but no caspase-like activity.</text>
</comment>
<comment type="activity regulation">
    <text evidence="1">The formation of the proteasomal ATPase ARC-20S proteasome complex, likely via the docking of the C-termini of ARC into the intersubunit pockets in the alpha-rings, may trigger opening of the gate for substrate entry. Interconversion between the open-gate and close-gate conformations leads to a dynamic regulation of the 20S proteasome proteolysis activity.</text>
</comment>
<comment type="biophysicochemical properties">
    <kinetics>
        <KM evidence="6">61.4 uM for Suc-Leu-Leu-Val-Tyr-AMC (with the beta2-alpha1 proteasome subtype)</KM>
        <KM evidence="6">66.4 uM for Suc-Leu-Leu-Val-Tyr-AMC (with the beta2-alpha2 proteasome subtype)</KM>
        <KM evidence="6">71.2 uM for Suc-Leu-Leu-Val-Tyr-AMC (with the beta1-alpha2 proteasome subtype)</KM>
        <KM evidence="6">84.3 uM for Suc-Leu-Leu-Val-Tyr-AMC (with the beta1-alpha1 proteasome subtype)</KM>
        <text>The Vmax observed with the beta2-alpha1 proteasome subtype is 2.2-fold, 1.2-fold and 4-fold higher than that with the beta2-alpha2, beta1-alpha2 and beta1-alpha1 subtypes, respectively.</text>
    </kinetics>
</comment>
<comment type="pathway">
    <text evidence="1">Protein degradation; proteasomal Pup-dependent pathway.</text>
</comment>
<comment type="subunit">
    <text evidence="3 4 5 6">The 20S proteasome core is composed of 14 alpha and 14 beta subunits that assemble into four stacked heptameric rings, resulting in a barrel-shaped structure. The two inner rings, each composed of seven catalytic beta subunits, are sandwiched by two outer rings, each composed of seven alpha subunits. All four combinations of alpha- and beta-subunits (beta2-alpha1, beta2-alpha2, beta1-alpha2 and beta1-alpha1) yield fully assembled and proteolytically active proteasomes. The catalytic chamber with the active sites is on the inside of the barrel. Has probably a gated structure, the ends of the cylinder being occluded by the N-termini of the alpha-subunits. Is likely capped by the proteasome-associated ATPase, ARC.</text>
</comment>
<comment type="interaction">
    <interactant intactId="EBI-1037564">
        <id>Q53080</id>
    </interactant>
    <interactant intactId="EBI-1037574">
        <id>Q53079</id>
        <label>prcB1</label>
    </interactant>
    <organismsDiffer>false</organismsDiffer>
    <experiments>6</experiments>
</comment>
<comment type="subcellular location">
    <subcellularLocation>
        <location evidence="1">Cytoplasm</location>
    </subcellularLocation>
</comment>
<comment type="PTM">
    <text>The N-terminus is blocked.</text>
</comment>
<comment type="similarity">
    <text evidence="1">Belongs to the peptidase T1A family.</text>
</comment>
<proteinExistence type="evidence at protein level"/>
<reference key="1">
    <citation type="journal article" date="1995" name="Curr. Biol.">
        <title>The first characterization of a eubacterial proteasome: the 20S complex of Rhodococcus.</title>
        <authorList>
            <person name="Tamura T."/>
            <person name="Nagy I."/>
            <person name="Lupas A."/>
            <person name="Lottspeich F."/>
            <person name="Cejka Z."/>
            <person name="Schoofs G."/>
            <person name="Tanaka K."/>
            <person name="de Mot R."/>
            <person name="Baumeister W."/>
        </authorList>
    </citation>
    <scope>NUCLEOTIDE SEQUENCE [GENOMIC DNA]</scope>
    <scope>PARTIAL PROTEIN SEQUENCE</scope>
    <scope>BLOCKAGE OF N-TERMINUS</scope>
    <scope>FUNCTION</scope>
    <scope>CATALYTIC ACTIVITY</scope>
    <scope>SUBSTRATE SPECIFICITY</scope>
    <scope>SUBUNIT</scope>
    <source>
        <strain>NI86/21</strain>
    </source>
</reference>
<reference key="2">
    <citation type="journal article" date="1997" name="FEBS Lett.">
        <title>Subunit topology of the Rhodococcus proteasome.</title>
        <authorList>
            <person name="Zuhl F."/>
            <person name="Tamura T."/>
            <person name="Dolenc I."/>
            <person name="Cejka Z."/>
            <person name="Nagy I."/>
            <person name="De Mot R."/>
            <person name="Baumeister W."/>
        </authorList>
    </citation>
    <scope>SUBUNIT</scope>
    <scope>FUNCTION</scope>
    <scope>CATALYTIC ACTIVITY</scope>
    <scope>SUBSTRATE SPECIFICITY</scope>
    <scope>KINETIC PARAMETERS</scope>
    <source>
        <strain>NI86/21</strain>
    </source>
</reference>
<reference key="3">
    <citation type="journal article" date="2004" name="J. Mol. Biol.">
        <title>Crystal structures of the Rhodococcus proteasome with and without its pro-peptides: implications for the role of the pro-peptide in proteasome assembly.</title>
        <authorList>
            <person name="Kwon Y.D."/>
            <person name="Nagy I."/>
            <person name="Adams P.D."/>
            <person name="Baumeister W."/>
            <person name="Jap B.K."/>
        </authorList>
    </citation>
    <scope>X-RAY CRYSTALLOGRAPHY (2.6 ANGSTROMS) IN COMPLEX WITH BETA 1 SUBUNIT</scope>
    <scope>PROTEASOME ASSEMBLY PROCESS</scope>
</reference>
<reference key="4">
    <citation type="journal article" date="2006" name="Structure">
        <title>Proteasome assembly triggers a switch required for active-site maturation.</title>
        <authorList>
            <person name="Witt S."/>
            <person name="Kwon Y.D."/>
            <person name="Sharon M."/>
            <person name="Felderer K."/>
            <person name="Beuttler M."/>
            <person name="Robinson C.V."/>
            <person name="Baumeister W."/>
            <person name="Jap B.K."/>
        </authorList>
    </citation>
    <scope>X-RAY CRYSTALLOGRAPHY (3.2 ANGSTROMS) IN COMPLEX WITH BETA 1 SUBUNIT</scope>
    <scope>PROTEASOME ASSEMBLY PROCESS</scope>
</reference>
<sequence>MTMPYYASAEQIMRDRSELARKGIARGRSVVVLTFRDGVLFVAENPSTALHKVSELYDRLGFAAVGKYNEFENLRRAGIVHADMRGYSYDRRDVTGRSLANAYAQTLGTIFTEQPKPYEVEICVAEVGRVGSPKAPQLYRITYDGSIVDEQHFVVMGGTTEPIATAMRESYRADLDLEAAVGIAVNALRQGGAGEGEKRNVDVASLEVAVLDQSRPRRAFRRIAGTALEQLVPAEPAAASESAPEPKPDTETKPADTQD</sequence>
<dbReference type="EMBL" id="U26421">
    <property type="protein sequence ID" value="AAC45741.1"/>
    <property type="molecule type" value="Genomic_DNA"/>
</dbReference>
<dbReference type="RefSeq" id="WP_124395163.1">
    <property type="nucleotide sequence ID" value="NZ_JABBPH010000001.1"/>
</dbReference>
<dbReference type="PDB" id="1Q5Q">
    <property type="method" value="X-ray"/>
    <property type="resolution" value="2.60 A"/>
    <property type="chains" value="A/B/C/D/E/F/G=1-259"/>
</dbReference>
<dbReference type="PDB" id="1Q5R">
    <property type="method" value="X-ray"/>
    <property type="resolution" value="3.10 A"/>
    <property type="chains" value="A/B/C/D/E/F/G=8-259"/>
</dbReference>
<dbReference type="PDB" id="2H6J">
    <property type="method" value="X-ray"/>
    <property type="resolution" value="3.20 A"/>
    <property type="chains" value="A/B/C/D/E/F/G=1-259"/>
</dbReference>
<dbReference type="PDBsum" id="1Q5Q"/>
<dbReference type="PDBsum" id="1Q5R"/>
<dbReference type="PDBsum" id="2H6J"/>
<dbReference type="SMR" id="Q53080"/>
<dbReference type="DIP" id="DIP-29143N"/>
<dbReference type="IntAct" id="Q53080">
    <property type="interactions" value="1"/>
</dbReference>
<dbReference type="UniPathway" id="UPA00997"/>
<dbReference type="EvolutionaryTrace" id="Q53080"/>
<dbReference type="GO" id="GO:0005737">
    <property type="term" value="C:cytoplasm"/>
    <property type="evidence" value="ECO:0007669"/>
    <property type="project" value="UniProtKB-SubCell"/>
</dbReference>
<dbReference type="GO" id="GO:0019773">
    <property type="term" value="C:proteasome core complex, alpha-subunit complex"/>
    <property type="evidence" value="ECO:0000314"/>
    <property type="project" value="UniProtKB"/>
</dbReference>
<dbReference type="GO" id="GO:0004175">
    <property type="term" value="F:endopeptidase activity"/>
    <property type="evidence" value="ECO:0000314"/>
    <property type="project" value="UniProtKB"/>
</dbReference>
<dbReference type="GO" id="GO:0004298">
    <property type="term" value="F:threonine-type endopeptidase activity"/>
    <property type="evidence" value="ECO:0007669"/>
    <property type="project" value="InterPro"/>
</dbReference>
<dbReference type="GO" id="GO:0019941">
    <property type="term" value="P:modification-dependent protein catabolic process"/>
    <property type="evidence" value="ECO:0007669"/>
    <property type="project" value="UniProtKB-UniRule"/>
</dbReference>
<dbReference type="GO" id="GO:0010498">
    <property type="term" value="P:proteasomal protein catabolic process"/>
    <property type="evidence" value="ECO:0000314"/>
    <property type="project" value="UniProtKB"/>
</dbReference>
<dbReference type="CDD" id="cd01901">
    <property type="entry name" value="Ntn_hydrolase"/>
    <property type="match status" value="1"/>
</dbReference>
<dbReference type="FunFam" id="3.60.20.10:FF:000023">
    <property type="entry name" value="Proteasome subunit alpha"/>
    <property type="match status" value="1"/>
</dbReference>
<dbReference type="Gene3D" id="3.60.20.10">
    <property type="entry name" value="Glutamine Phosphoribosylpyrophosphate, subunit 1, domain 1"/>
    <property type="match status" value="1"/>
</dbReference>
<dbReference type="HAMAP" id="MF_00289_B">
    <property type="entry name" value="Proteasome_A_B"/>
    <property type="match status" value="1"/>
</dbReference>
<dbReference type="InterPro" id="IPR029055">
    <property type="entry name" value="Ntn_hydrolases_N"/>
</dbReference>
<dbReference type="InterPro" id="IPR050115">
    <property type="entry name" value="Proteasome_alpha"/>
</dbReference>
<dbReference type="InterPro" id="IPR023332">
    <property type="entry name" value="Proteasome_alpha-type"/>
</dbReference>
<dbReference type="InterPro" id="IPR022296">
    <property type="entry name" value="Proteasome_asu_bac"/>
</dbReference>
<dbReference type="InterPro" id="IPR001353">
    <property type="entry name" value="Proteasome_sua/b"/>
</dbReference>
<dbReference type="NCBIfam" id="TIGR03691">
    <property type="entry name" value="20S_bact_alpha"/>
    <property type="match status" value="1"/>
</dbReference>
<dbReference type="PANTHER" id="PTHR11599">
    <property type="entry name" value="PROTEASOME SUBUNIT ALPHA/BETA"/>
    <property type="match status" value="1"/>
</dbReference>
<dbReference type="Pfam" id="PF00227">
    <property type="entry name" value="Proteasome"/>
    <property type="match status" value="1"/>
</dbReference>
<dbReference type="SUPFAM" id="SSF56235">
    <property type="entry name" value="N-terminal nucleophile aminohydrolases (Ntn hydrolases)"/>
    <property type="match status" value="1"/>
</dbReference>
<dbReference type="PROSITE" id="PS51475">
    <property type="entry name" value="PROTEASOME_ALPHA_2"/>
    <property type="match status" value="1"/>
</dbReference>
<accession>Q53080</accession>
<feature type="chain" id="PRO_0000397128" description="Proteasome subunit alpha 1">
    <location>
        <begin position="1"/>
        <end position="259"/>
    </location>
</feature>
<feature type="region of interest" description="Disordered" evidence="2">
    <location>
        <begin position="231"/>
        <end position="259"/>
    </location>
</feature>
<feature type="compositionally biased region" description="Low complexity" evidence="2">
    <location>
        <begin position="233"/>
        <end position="243"/>
    </location>
</feature>
<feature type="compositionally biased region" description="Basic and acidic residues" evidence="2">
    <location>
        <begin position="244"/>
        <end position="259"/>
    </location>
</feature>
<feature type="helix" evidence="7">
    <location>
        <begin position="10"/>
        <end position="25"/>
    </location>
</feature>
<feature type="strand" evidence="7">
    <location>
        <begin position="30"/>
        <end position="34"/>
    </location>
</feature>
<feature type="strand" evidence="7">
    <location>
        <begin position="36"/>
        <end position="43"/>
    </location>
</feature>
<feature type="strand" evidence="7">
    <location>
        <begin position="48"/>
        <end position="50"/>
    </location>
</feature>
<feature type="strand" evidence="7">
    <location>
        <begin position="52"/>
        <end position="57"/>
    </location>
</feature>
<feature type="strand" evidence="7">
    <location>
        <begin position="60"/>
        <end position="66"/>
    </location>
</feature>
<feature type="helix" evidence="7">
    <location>
        <begin position="68"/>
        <end position="88"/>
    </location>
</feature>
<feature type="helix" evidence="7">
    <location>
        <begin position="91"/>
        <end position="93"/>
    </location>
</feature>
<feature type="helix" evidence="7">
    <location>
        <begin position="96"/>
        <end position="113"/>
    </location>
</feature>
<feature type="strand" evidence="7">
    <location>
        <begin position="114"/>
        <end position="116"/>
    </location>
</feature>
<feature type="strand" evidence="7">
    <location>
        <begin position="120"/>
        <end position="126"/>
    </location>
</feature>
<feature type="strand" evidence="8">
    <location>
        <begin position="130"/>
        <end position="132"/>
    </location>
</feature>
<feature type="strand" evidence="7">
    <location>
        <begin position="137"/>
        <end position="142"/>
    </location>
</feature>
<feature type="turn" evidence="8">
    <location>
        <begin position="143"/>
        <end position="145"/>
    </location>
</feature>
<feature type="strand" evidence="7">
    <location>
        <begin position="147"/>
        <end position="159"/>
    </location>
</feature>
<feature type="helix" evidence="7">
    <location>
        <begin position="160"/>
        <end position="170"/>
    </location>
</feature>
<feature type="helix" evidence="7">
    <location>
        <begin position="177"/>
        <end position="188"/>
    </location>
</feature>
<feature type="strand" evidence="7">
    <location>
        <begin position="206"/>
        <end position="212"/>
    </location>
</feature>
<feature type="strand" evidence="7">
    <location>
        <begin position="215"/>
        <end position="217"/>
    </location>
</feature>
<feature type="strand" evidence="7">
    <location>
        <begin position="220"/>
        <end position="222"/>
    </location>
</feature>
<feature type="helix" evidence="7">
    <location>
        <begin position="225"/>
        <end position="229"/>
    </location>
</feature>
<keyword id="KW-0002">3D-structure</keyword>
<keyword id="KW-0963">Cytoplasm</keyword>
<keyword id="KW-0903">Direct protein sequencing</keyword>
<keyword id="KW-0647">Proteasome</keyword>
<evidence type="ECO:0000255" key="1">
    <source>
        <dbReference type="HAMAP-Rule" id="MF_00289"/>
    </source>
</evidence>
<evidence type="ECO:0000256" key="2">
    <source>
        <dbReference type="SAM" id="MobiDB-lite"/>
    </source>
</evidence>
<evidence type="ECO:0000269" key="3">
    <source>
    </source>
</evidence>
<evidence type="ECO:0000269" key="4">
    <source>
    </source>
</evidence>
<evidence type="ECO:0000269" key="5">
    <source>
    </source>
</evidence>
<evidence type="ECO:0000269" key="6">
    <source>
    </source>
</evidence>
<evidence type="ECO:0007829" key="7">
    <source>
        <dbReference type="PDB" id="1Q5Q"/>
    </source>
</evidence>
<evidence type="ECO:0007829" key="8">
    <source>
        <dbReference type="PDB" id="2H6J"/>
    </source>
</evidence>
<name>PSA1_RHOER</name>
<organism>
    <name type="scientific">Rhodococcus erythropolis</name>
    <name type="common">Arthrobacter picolinophilus</name>
    <dbReference type="NCBI Taxonomy" id="1833"/>
    <lineage>
        <taxon>Bacteria</taxon>
        <taxon>Bacillati</taxon>
        <taxon>Actinomycetota</taxon>
        <taxon>Actinomycetes</taxon>
        <taxon>Mycobacteriales</taxon>
        <taxon>Nocardiaceae</taxon>
        <taxon>Rhodococcus</taxon>
        <taxon>Rhodococcus erythropolis group</taxon>
    </lineage>
</organism>
<gene>
    <name evidence="1" type="primary">prcA1</name>
</gene>